<proteinExistence type="inferred from homology"/>
<protein>
    <recommendedName>
        <fullName>NADH-quinone oxidoreductase subunit E</fullName>
        <ecNumber>7.1.1.-</ecNumber>
    </recommendedName>
    <alternativeName>
        <fullName>NADH dehydrogenase I subunit E</fullName>
    </alternativeName>
    <alternativeName>
        <fullName>NDH-1 subunit E</fullName>
    </alternativeName>
</protein>
<gene>
    <name type="primary">nuoE</name>
    <name type="ordered locus">PA2640</name>
</gene>
<organism>
    <name type="scientific">Pseudomonas aeruginosa (strain ATCC 15692 / DSM 22644 / CIP 104116 / JCM 14847 / LMG 12228 / 1C / PRS 101 / PAO1)</name>
    <dbReference type="NCBI Taxonomy" id="208964"/>
    <lineage>
        <taxon>Bacteria</taxon>
        <taxon>Pseudomonadati</taxon>
        <taxon>Pseudomonadota</taxon>
        <taxon>Gammaproteobacteria</taxon>
        <taxon>Pseudomonadales</taxon>
        <taxon>Pseudomonadaceae</taxon>
        <taxon>Pseudomonas</taxon>
    </lineage>
</organism>
<feature type="chain" id="PRO_0000287833" description="NADH-quinone oxidoreductase subunit E">
    <location>
        <begin position="1"/>
        <end position="166"/>
    </location>
</feature>
<feature type="binding site" evidence="2">
    <location>
        <position position="92"/>
    </location>
    <ligand>
        <name>[2Fe-2S] cluster</name>
        <dbReference type="ChEBI" id="CHEBI:190135"/>
    </ligand>
</feature>
<feature type="binding site" evidence="2">
    <location>
        <position position="97"/>
    </location>
    <ligand>
        <name>[2Fe-2S] cluster</name>
        <dbReference type="ChEBI" id="CHEBI:190135"/>
    </ligand>
</feature>
<feature type="binding site" evidence="2">
    <location>
        <position position="133"/>
    </location>
    <ligand>
        <name>[2Fe-2S] cluster</name>
        <dbReference type="ChEBI" id="CHEBI:190135"/>
    </ligand>
</feature>
<feature type="binding site" evidence="2">
    <location>
        <position position="137"/>
    </location>
    <ligand>
        <name>[2Fe-2S] cluster</name>
        <dbReference type="ChEBI" id="CHEBI:190135"/>
    </ligand>
</feature>
<keyword id="KW-0001">2Fe-2S</keyword>
<keyword id="KW-0408">Iron</keyword>
<keyword id="KW-0411">Iron-sulfur</keyword>
<keyword id="KW-0479">Metal-binding</keyword>
<keyword id="KW-0520">NAD</keyword>
<keyword id="KW-0874">Quinone</keyword>
<keyword id="KW-1185">Reference proteome</keyword>
<keyword id="KW-1278">Translocase</keyword>
<keyword id="KW-0830">Ubiquinone</keyword>
<reference key="1">
    <citation type="journal article" date="2000" name="Nature">
        <title>Complete genome sequence of Pseudomonas aeruginosa PAO1, an opportunistic pathogen.</title>
        <authorList>
            <person name="Stover C.K."/>
            <person name="Pham X.-Q.T."/>
            <person name="Erwin A.L."/>
            <person name="Mizoguchi S.D."/>
            <person name="Warrener P."/>
            <person name="Hickey M.J."/>
            <person name="Brinkman F.S.L."/>
            <person name="Hufnagle W.O."/>
            <person name="Kowalik D.J."/>
            <person name="Lagrou M."/>
            <person name="Garber R.L."/>
            <person name="Goltry L."/>
            <person name="Tolentino E."/>
            <person name="Westbrock-Wadman S."/>
            <person name="Yuan Y."/>
            <person name="Brody L.L."/>
            <person name="Coulter S.N."/>
            <person name="Folger K.R."/>
            <person name="Kas A."/>
            <person name="Larbig K."/>
            <person name="Lim R.M."/>
            <person name="Smith K.A."/>
            <person name="Spencer D.H."/>
            <person name="Wong G.K.-S."/>
            <person name="Wu Z."/>
            <person name="Paulsen I.T."/>
            <person name="Reizer J."/>
            <person name="Saier M.H. Jr."/>
            <person name="Hancock R.E.W."/>
            <person name="Lory S."/>
            <person name="Olson M.V."/>
        </authorList>
    </citation>
    <scope>NUCLEOTIDE SEQUENCE [LARGE SCALE GENOMIC DNA]</scope>
    <source>
        <strain>ATCC 15692 / DSM 22644 / CIP 104116 / JCM 14847 / LMG 12228 / 1C / PRS 101 / PAO1</strain>
    </source>
</reference>
<accession>Q9I0J8</accession>
<dbReference type="EC" id="7.1.1.-"/>
<dbReference type="EMBL" id="AE004091">
    <property type="protein sequence ID" value="AAG06028.1"/>
    <property type="molecule type" value="Genomic_DNA"/>
</dbReference>
<dbReference type="PIR" id="E83316">
    <property type="entry name" value="E83316"/>
</dbReference>
<dbReference type="RefSeq" id="NP_251330.1">
    <property type="nucleotide sequence ID" value="NC_002516.2"/>
</dbReference>
<dbReference type="RefSeq" id="WP_003090460.1">
    <property type="nucleotide sequence ID" value="NZ_QZGE01000008.1"/>
</dbReference>
<dbReference type="SMR" id="Q9I0J8"/>
<dbReference type="FunCoup" id="Q9I0J8">
    <property type="interactions" value="576"/>
</dbReference>
<dbReference type="STRING" id="208964.PA2640"/>
<dbReference type="PaxDb" id="208964-PA2640"/>
<dbReference type="DNASU" id="882347"/>
<dbReference type="GeneID" id="882347"/>
<dbReference type="KEGG" id="pae:PA2640"/>
<dbReference type="PATRIC" id="fig|208964.12.peg.2762"/>
<dbReference type="PseudoCAP" id="PA2640"/>
<dbReference type="HOGENOM" id="CLU_054362_2_0_6"/>
<dbReference type="InParanoid" id="Q9I0J8"/>
<dbReference type="OrthoDB" id="9807941at2"/>
<dbReference type="PhylomeDB" id="Q9I0J8"/>
<dbReference type="BioCyc" id="PAER208964:G1FZ6-2680-MONOMER"/>
<dbReference type="Proteomes" id="UP000002438">
    <property type="component" value="Chromosome"/>
</dbReference>
<dbReference type="GO" id="GO:0051537">
    <property type="term" value="F:2 iron, 2 sulfur cluster binding"/>
    <property type="evidence" value="ECO:0007669"/>
    <property type="project" value="UniProtKB-KW"/>
</dbReference>
<dbReference type="GO" id="GO:0046872">
    <property type="term" value="F:metal ion binding"/>
    <property type="evidence" value="ECO:0007669"/>
    <property type="project" value="UniProtKB-KW"/>
</dbReference>
<dbReference type="GO" id="GO:0016491">
    <property type="term" value="F:oxidoreductase activity"/>
    <property type="evidence" value="ECO:0007669"/>
    <property type="project" value="InterPro"/>
</dbReference>
<dbReference type="GO" id="GO:0048038">
    <property type="term" value="F:quinone binding"/>
    <property type="evidence" value="ECO:0007669"/>
    <property type="project" value="UniProtKB-KW"/>
</dbReference>
<dbReference type="GO" id="GO:0022904">
    <property type="term" value="P:respiratory electron transport chain"/>
    <property type="evidence" value="ECO:0000318"/>
    <property type="project" value="GO_Central"/>
</dbReference>
<dbReference type="CDD" id="cd03064">
    <property type="entry name" value="TRX_Fd_NuoE"/>
    <property type="match status" value="1"/>
</dbReference>
<dbReference type="FunFam" id="1.10.10.1590:FF:000001">
    <property type="entry name" value="NADH-quinone oxidoreductase subunit E"/>
    <property type="match status" value="1"/>
</dbReference>
<dbReference type="FunFam" id="3.40.30.10:FF:000015">
    <property type="entry name" value="NADH-quinone oxidoreductase subunit E"/>
    <property type="match status" value="1"/>
</dbReference>
<dbReference type="Gene3D" id="3.40.30.10">
    <property type="entry name" value="Glutaredoxin"/>
    <property type="match status" value="1"/>
</dbReference>
<dbReference type="Gene3D" id="1.10.10.1590">
    <property type="entry name" value="NADH-quinone oxidoreductase subunit E"/>
    <property type="match status" value="1"/>
</dbReference>
<dbReference type="InterPro" id="IPR002023">
    <property type="entry name" value="NuoE-like"/>
</dbReference>
<dbReference type="InterPro" id="IPR042128">
    <property type="entry name" value="NuoE_dom"/>
</dbReference>
<dbReference type="InterPro" id="IPR041921">
    <property type="entry name" value="NuoE_N"/>
</dbReference>
<dbReference type="InterPro" id="IPR036249">
    <property type="entry name" value="Thioredoxin-like_sf"/>
</dbReference>
<dbReference type="NCBIfam" id="TIGR01958">
    <property type="entry name" value="nuoE_fam"/>
    <property type="match status" value="1"/>
</dbReference>
<dbReference type="NCBIfam" id="NF005722">
    <property type="entry name" value="PRK07539.1-2"/>
    <property type="match status" value="1"/>
</dbReference>
<dbReference type="PANTHER" id="PTHR10371:SF3">
    <property type="entry name" value="NADH DEHYDROGENASE [UBIQUINONE] FLAVOPROTEIN 2, MITOCHONDRIAL"/>
    <property type="match status" value="1"/>
</dbReference>
<dbReference type="PANTHER" id="PTHR10371">
    <property type="entry name" value="NADH DEHYDROGENASE UBIQUINONE FLAVOPROTEIN 2, MITOCHONDRIAL"/>
    <property type="match status" value="1"/>
</dbReference>
<dbReference type="Pfam" id="PF01257">
    <property type="entry name" value="2Fe-2S_thioredx"/>
    <property type="match status" value="1"/>
</dbReference>
<dbReference type="PIRSF" id="PIRSF000216">
    <property type="entry name" value="NADH_DH_24kDa"/>
    <property type="match status" value="1"/>
</dbReference>
<dbReference type="SUPFAM" id="SSF52833">
    <property type="entry name" value="Thioredoxin-like"/>
    <property type="match status" value="1"/>
</dbReference>
<dbReference type="PROSITE" id="PS01099">
    <property type="entry name" value="COMPLEX1_24K"/>
    <property type="match status" value="1"/>
</dbReference>
<sequence>MSQSNLIQTDRFVLSETERSSIEHEMHHYEDPRAASIEALKIVQKQRGWVPDGAIPAIGEVLGIPASDVEGVATFYSQIFRQPVGRHIIRVCDSMVCYIGGHESVVGEIQKQLGIGLGQTTADGRFTLLPVCCLGNCDKAPALMIDDDTHGDVRPDGVAKLLEAYV</sequence>
<name>NUOE_PSEAE</name>
<comment type="function">
    <text evidence="1">NDH-1 shuttles electrons from NADH, via FMN and iron-sulfur (Fe-S) centers, to quinones in the respiratory chain. The immediate electron acceptor for the enzyme in this species is believed to be ubiquinone. Couples the redox reaction to proton translocation (for every two electrons transferred, four hydrogen ions are translocated across the cytoplasmic membrane), and thus conserves the redox energy in a proton gradient (By similarity).</text>
</comment>
<comment type="catalytic activity">
    <reaction>
        <text>a quinone + NADH + 5 H(+)(in) = a quinol + NAD(+) + 4 H(+)(out)</text>
        <dbReference type="Rhea" id="RHEA:57888"/>
        <dbReference type="ChEBI" id="CHEBI:15378"/>
        <dbReference type="ChEBI" id="CHEBI:24646"/>
        <dbReference type="ChEBI" id="CHEBI:57540"/>
        <dbReference type="ChEBI" id="CHEBI:57945"/>
        <dbReference type="ChEBI" id="CHEBI:132124"/>
    </reaction>
</comment>
<comment type="cofactor">
    <cofactor evidence="3">
        <name>[2Fe-2S] cluster</name>
        <dbReference type="ChEBI" id="CHEBI:190135"/>
    </cofactor>
    <text evidence="3">Binds 1 [2Fe-2S] cluster.</text>
</comment>
<comment type="subunit">
    <text evidence="1">Composed of 13 different subunits. Subunits NuoCD, E, F, and G constitute the peripheral sector of the complex (By similarity).</text>
</comment>
<comment type="similarity">
    <text evidence="3">Belongs to the complex I 24 kDa subunit family.</text>
</comment>
<evidence type="ECO:0000250" key="1"/>
<evidence type="ECO:0000255" key="2"/>
<evidence type="ECO:0000305" key="3"/>